<gene>
    <name evidence="1" type="primary">msrB</name>
    <name type="ordered locus">YPA_1515</name>
</gene>
<organism>
    <name type="scientific">Yersinia pestis bv. Antiqua (strain Antiqua)</name>
    <dbReference type="NCBI Taxonomy" id="360102"/>
    <lineage>
        <taxon>Bacteria</taxon>
        <taxon>Pseudomonadati</taxon>
        <taxon>Pseudomonadota</taxon>
        <taxon>Gammaproteobacteria</taxon>
        <taxon>Enterobacterales</taxon>
        <taxon>Yersiniaceae</taxon>
        <taxon>Yersinia</taxon>
    </lineage>
</organism>
<accession>Q1C7U0</accession>
<protein>
    <recommendedName>
        <fullName evidence="1">Peptide methionine sulfoxide reductase MsrB</fullName>
        <ecNumber evidence="1">1.8.4.12</ecNumber>
    </recommendedName>
    <alternativeName>
        <fullName evidence="1">Peptide-methionine (R)-S-oxide reductase</fullName>
    </alternativeName>
</protein>
<evidence type="ECO:0000255" key="1">
    <source>
        <dbReference type="HAMAP-Rule" id="MF_01400"/>
    </source>
</evidence>
<evidence type="ECO:0000255" key="2">
    <source>
        <dbReference type="PROSITE-ProRule" id="PRU01126"/>
    </source>
</evidence>
<sequence length="137" mass="15515">MAKELNPTENIEKLSDIQRYVTQERGTEAPFTGKLLHNKRDGVYQCLCCHQPLFISESKFDSGCGWPSFYQPIDADSIRYIDDYSHNMHRIEIRCGNCDAHLGHVFPDGPQPTGERYCINSASLNFVDDQNGEQTAG</sequence>
<keyword id="KW-0479">Metal-binding</keyword>
<keyword id="KW-0560">Oxidoreductase</keyword>
<keyword id="KW-0862">Zinc</keyword>
<name>MSRB_YERPA</name>
<dbReference type="EC" id="1.8.4.12" evidence="1"/>
<dbReference type="EMBL" id="CP000308">
    <property type="protein sequence ID" value="ABG13482.1"/>
    <property type="molecule type" value="Genomic_DNA"/>
</dbReference>
<dbReference type="RefSeq" id="WP_002211677.1">
    <property type="nucleotide sequence ID" value="NZ_CP009906.1"/>
</dbReference>
<dbReference type="SMR" id="Q1C7U0"/>
<dbReference type="GeneID" id="57976510"/>
<dbReference type="KEGG" id="ypa:YPA_1515"/>
<dbReference type="Proteomes" id="UP000001971">
    <property type="component" value="Chromosome"/>
</dbReference>
<dbReference type="GO" id="GO:0005737">
    <property type="term" value="C:cytoplasm"/>
    <property type="evidence" value="ECO:0007669"/>
    <property type="project" value="TreeGrafter"/>
</dbReference>
<dbReference type="GO" id="GO:0033743">
    <property type="term" value="F:peptide-methionine (R)-S-oxide reductase activity"/>
    <property type="evidence" value="ECO:0007669"/>
    <property type="project" value="UniProtKB-UniRule"/>
</dbReference>
<dbReference type="GO" id="GO:0008270">
    <property type="term" value="F:zinc ion binding"/>
    <property type="evidence" value="ECO:0007669"/>
    <property type="project" value="UniProtKB-UniRule"/>
</dbReference>
<dbReference type="GO" id="GO:0030091">
    <property type="term" value="P:protein repair"/>
    <property type="evidence" value="ECO:0007669"/>
    <property type="project" value="InterPro"/>
</dbReference>
<dbReference type="GO" id="GO:0006979">
    <property type="term" value="P:response to oxidative stress"/>
    <property type="evidence" value="ECO:0007669"/>
    <property type="project" value="InterPro"/>
</dbReference>
<dbReference type="FunFam" id="2.170.150.20:FF:000001">
    <property type="entry name" value="Peptide methionine sulfoxide reductase MsrB"/>
    <property type="match status" value="1"/>
</dbReference>
<dbReference type="Gene3D" id="2.170.150.20">
    <property type="entry name" value="Peptide methionine sulfoxide reductase"/>
    <property type="match status" value="1"/>
</dbReference>
<dbReference type="HAMAP" id="MF_01400">
    <property type="entry name" value="MsrB"/>
    <property type="match status" value="1"/>
</dbReference>
<dbReference type="InterPro" id="IPR028427">
    <property type="entry name" value="Met_Sox_Rdtase_MsrB"/>
</dbReference>
<dbReference type="InterPro" id="IPR002579">
    <property type="entry name" value="Met_Sox_Rdtase_MsrB_dom"/>
</dbReference>
<dbReference type="InterPro" id="IPR011057">
    <property type="entry name" value="Mss4-like_sf"/>
</dbReference>
<dbReference type="NCBIfam" id="TIGR00357">
    <property type="entry name" value="peptide-methionine (R)-S-oxide reductase MsrB"/>
    <property type="match status" value="1"/>
</dbReference>
<dbReference type="PANTHER" id="PTHR10173">
    <property type="entry name" value="METHIONINE SULFOXIDE REDUCTASE"/>
    <property type="match status" value="1"/>
</dbReference>
<dbReference type="PANTHER" id="PTHR10173:SF52">
    <property type="entry name" value="METHIONINE-R-SULFOXIDE REDUCTASE B1"/>
    <property type="match status" value="1"/>
</dbReference>
<dbReference type="Pfam" id="PF01641">
    <property type="entry name" value="SelR"/>
    <property type="match status" value="1"/>
</dbReference>
<dbReference type="SUPFAM" id="SSF51316">
    <property type="entry name" value="Mss4-like"/>
    <property type="match status" value="1"/>
</dbReference>
<dbReference type="PROSITE" id="PS51790">
    <property type="entry name" value="MSRB"/>
    <property type="match status" value="1"/>
</dbReference>
<feature type="chain" id="PRO_1000068302" description="Peptide methionine sulfoxide reductase MsrB">
    <location>
        <begin position="1"/>
        <end position="137"/>
    </location>
</feature>
<feature type="domain" description="MsrB" evidence="2">
    <location>
        <begin position="7"/>
        <end position="129"/>
    </location>
</feature>
<feature type="active site" description="Nucleophile" evidence="2">
    <location>
        <position position="118"/>
    </location>
</feature>
<feature type="binding site" evidence="2">
    <location>
        <position position="46"/>
    </location>
    <ligand>
        <name>Zn(2+)</name>
        <dbReference type="ChEBI" id="CHEBI:29105"/>
    </ligand>
</feature>
<feature type="binding site" evidence="2">
    <location>
        <position position="49"/>
    </location>
    <ligand>
        <name>Zn(2+)</name>
        <dbReference type="ChEBI" id="CHEBI:29105"/>
    </ligand>
</feature>
<feature type="binding site" evidence="2">
    <location>
        <position position="95"/>
    </location>
    <ligand>
        <name>Zn(2+)</name>
        <dbReference type="ChEBI" id="CHEBI:29105"/>
    </ligand>
</feature>
<feature type="binding site" evidence="2">
    <location>
        <position position="98"/>
    </location>
    <ligand>
        <name>Zn(2+)</name>
        <dbReference type="ChEBI" id="CHEBI:29105"/>
    </ligand>
</feature>
<reference key="1">
    <citation type="journal article" date="2006" name="J. Bacteriol.">
        <title>Complete genome sequence of Yersinia pestis strains Antiqua and Nepal516: evidence of gene reduction in an emerging pathogen.</title>
        <authorList>
            <person name="Chain P.S.G."/>
            <person name="Hu P."/>
            <person name="Malfatti S.A."/>
            <person name="Radnedge L."/>
            <person name="Larimer F."/>
            <person name="Vergez L.M."/>
            <person name="Worsham P."/>
            <person name="Chu M.C."/>
            <person name="Andersen G.L."/>
        </authorList>
    </citation>
    <scope>NUCLEOTIDE SEQUENCE [LARGE SCALE GENOMIC DNA]</scope>
    <source>
        <strain>Antiqua</strain>
    </source>
</reference>
<comment type="catalytic activity">
    <reaction evidence="1">
        <text>L-methionyl-[protein] + [thioredoxin]-disulfide + H2O = L-methionyl-(R)-S-oxide-[protein] + [thioredoxin]-dithiol</text>
        <dbReference type="Rhea" id="RHEA:24164"/>
        <dbReference type="Rhea" id="RHEA-COMP:10698"/>
        <dbReference type="Rhea" id="RHEA-COMP:10700"/>
        <dbReference type="Rhea" id="RHEA-COMP:12313"/>
        <dbReference type="Rhea" id="RHEA-COMP:12314"/>
        <dbReference type="ChEBI" id="CHEBI:15377"/>
        <dbReference type="ChEBI" id="CHEBI:16044"/>
        <dbReference type="ChEBI" id="CHEBI:29950"/>
        <dbReference type="ChEBI" id="CHEBI:45764"/>
        <dbReference type="ChEBI" id="CHEBI:50058"/>
        <dbReference type="EC" id="1.8.4.12"/>
    </reaction>
</comment>
<comment type="cofactor">
    <cofactor evidence="1">
        <name>Zn(2+)</name>
        <dbReference type="ChEBI" id="CHEBI:29105"/>
    </cofactor>
    <text evidence="1">Binds 1 zinc ion per subunit. The zinc ion is important for the structural integrity of the protein.</text>
</comment>
<comment type="similarity">
    <text evidence="1">Belongs to the MsrB Met sulfoxide reductase family.</text>
</comment>
<proteinExistence type="inferred from homology"/>